<comment type="function">
    <text evidence="1">Catalyzes the dehydration of inosose (2-keto-myo-inositol, 2KMI or 2,4,6/3,5-pentahydroxycyclohexanone) to 3D-(3,5/4)-trihydroxycyclohexane-1,2-dione (D-2,3-diketo-4-deoxy-epi-inositol).</text>
</comment>
<comment type="catalytic activity">
    <reaction evidence="1">
        <text>scyllo-inosose = 3D-3,5/4-trihydroxycyclohexane-1,2-dione + H2O</text>
        <dbReference type="Rhea" id="RHEA:14065"/>
        <dbReference type="ChEBI" id="CHEBI:15377"/>
        <dbReference type="ChEBI" id="CHEBI:17811"/>
        <dbReference type="ChEBI" id="CHEBI:28446"/>
        <dbReference type="EC" id="4.2.1.44"/>
    </reaction>
</comment>
<comment type="cofactor">
    <cofactor evidence="1">
        <name>glutathione</name>
        <dbReference type="ChEBI" id="CHEBI:57925"/>
    </cofactor>
</comment>
<comment type="cofactor">
    <cofactor evidence="1">
        <name>Co(2+)</name>
        <dbReference type="ChEBI" id="CHEBI:48828"/>
    </cofactor>
    <cofactor evidence="1">
        <name>Mn(2+)</name>
        <dbReference type="ChEBI" id="CHEBI:29035"/>
    </cofactor>
</comment>
<comment type="pathway">
    <text evidence="1">Polyol metabolism; myo-inositol degradation into acetyl-CoA; acetyl-CoA from myo-inositol: step 2/7.</text>
</comment>
<comment type="similarity">
    <text evidence="1">Belongs to the IolE/MocC family.</text>
</comment>
<proteinExistence type="inferred from homology"/>
<gene>
    <name evidence="1" type="primary">iolE</name>
    <name type="ordered locus">LCABL_02230</name>
</gene>
<evidence type="ECO:0000255" key="1">
    <source>
        <dbReference type="HAMAP-Rule" id="MF_01672"/>
    </source>
</evidence>
<keyword id="KW-0170">Cobalt</keyword>
<keyword id="KW-0456">Lyase</keyword>
<keyword id="KW-0464">Manganese</keyword>
<reference key="1">
    <citation type="submission" date="2008-06" db="EMBL/GenBank/DDBJ databases">
        <title>Lactobacillus casei BL23 complete genome sequence.</title>
        <authorList>
            <person name="Maze A."/>
            <person name="Boel G."/>
            <person name="Bourand A."/>
            <person name="Loux V."/>
            <person name="Gibrat J.F."/>
            <person name="Zuniga M."/>
            <person name="Hartke A."/>
            <person name="Deutscher J."/>
        </authorList>
    </citation>
    <scope>NUCLEOTIDE SEQUENCE [LARGE SCALE GENOMIC DNA]</scope>
    <source>
        <strain>BL23</strain>
    </source>
</reference>
<dbReference type="EC" id="4.2.1.44" evidence="1"/>
<dbReference type="EMBL" id="FM177140">
    <property type="protein sequence ID" value="CAQ65355.1"/>
    <property type="molecule type" value="Genomic_DNA"/>
</dbReference>
<dbReference type="SMR" id="B3W8L5"/>
<dbReference type="KEGG" id="lcb:LCABL_02230"/>
<dbReference type="HOGENOM" id="CLU_059523_0_0_9"/>
<dbReference type="UniPathway" id="UPA00076">
    <property type="reaction ID" value="UER00144"/>
</dbReference>
<dbReference type="GO" id="GO:0030145">
    <property type="term" value="F:manganese ion binding"/>
    <property type="evidence" value="ECO:0007669"/>
    <property type="project" value="UniProtKB-UniRule"/>
</dbReference>
<dbReference type="GO" id="GO:0050114">
    <property type="term" value="F:myo-inosose-2 dehydratase activity"/>
    <property type="evidence" value="ECO:0007669"/>
    <property type="project" value="UniProtKB-UniRule"/>
</dbReference>
<dbReference type="GO" id="GO:0019310">
    <property type="term" value="P:inositol catabolic process"/>
    <property type="evidence" value="ECO:0007669"/>
    <property type="project" value="UniProtKB-UniRule"/>
</dbReference>
<dbReference type="Gene3D" id="3.20.20.150">
    <property type="entry name" value="Divalent-metal-dependent TIM barrel enzymes"/>
    <property type="match status" value="1"/>
</dbReference>
<dbReference type="HAMAP" id="MF_01672">
    <property type="entry name" value="IolE"/>
    <property type="match status" value="1"/>
</dbReference>
<dbReference type="InterPro" id="IPR023952">
    <property type="entry name" value="IolE"/>
</dbReference>
<dbReference type="InterPro" id="IPR030823">
    <property type="entry name" value="IolE/MocC"/>
</dbReference>
<dbReference type="InterPro" id="IPR050312">
    <property type="entry name" value="IolE/XylAMocC-like"/>
</dbReference>
<dbReference type="InterPro" id="IPR036237">
    <property type="entry name" value="Xyl_isomerase-like_sf"/>
</dbReference>
<dbReference type="InterPro" id="IPR013022">
    <property type="entry name" value="Xyl_isomerase-like_TIM-brl"/>
</dbReference>
<dbReference type="NCBIfam" id="TIGR04379">
    <property type="entry name" value="myo_inos_iolE"/>
    <property type="match status" value="1"/>
</dbReference>
<dbReference type="PANTHER" id="PTHR12110">
    <property type="entry name" value="HYDROXYPYRUVATE ISOMERASE"/>
    <property type="match status" value="1"/>
</dbReference>
<dbReference type="PANTHER" id="PTHR12110:SF41">
    <property type="entry name" value="INOSOSE DEHYDRATASE"/>
    <property type="match status" value="1"/>
</dbReference>
<dbReference type="Pfam" id="PF01261">
    <property type="entry name" value="AP_endonuc_2"/>
    <property type="match status" value="1"/>
</dbReference>
<dbReference type="SUPFAM" id="SSF51658">
    <property type="entry name" value="Xylose isomerase-like"/>
    <property type="match status" value="1"/>
</dbReference>
<accession>B3W8L5</accession>
<protein>
    <recommendedName>
        <fullName evidence="1">Inosose dehydratase</fullName>
        <ecNumber evidence="1">4.2.1.44</ecNumber>
    </recommendedName>
    <alternativeName>
        <fullName evidence="1">2-keto-myo-inositol dehydratase</fullName>
        <shortName evidence="1">2KMI dehydratase</shortName>
    </alternativeName>
</protein>
<name>IOLE_LACCB</name>
<feature type="chain" id="PRO_0000352373" description="Inosose dehydratase">
    <location>
        <begin position="1"/>
        <end position="301"/>
    </location>
</feature>
<organism>
    <name type="scientific">Lacticaseibacillus casei (strain BL23)</name>
    <name type="common">Lactobacillus casei</name>
    <dbReference type="NCBI Taxonomy" id="543734"/>
    <lineage>
        <taxon>Bacteria</taxon>
        <taxon>Bacillati</taxon>
        <taxon>Bacillota</taxon>
        <taxon>Bacilli</taxon>
        <taxon>Lactobacillales</taxon>
        <taxon>Lactobacillaceae</taxon>
        <taxon>Lacticaseibacillus</taxon>
    </lineage>
</organism>
<sequence length="301" mass="34100">MLKVTIELGIAPIGWTNDDMPELGKEVTFEQAIDEMTLAGYKGTEVGNKYPKDPKTLKHFLDLRHLKIASAWFSAFLTTKPYEETEAAFIKHRDFLHAMGAKVIVVAEQGHSVQGLLDKSVFDDKPHFTDDEWERLATGLERLGDRAREVGMQIVYHHHMGTGVQTTAEIDRLMTMTDPDKVSLLFDTGHLVLSGEDPLTIFNRYQDRIKHIHFKDVRQQQADEEHKDHLSFLAGVKNGMFTVPGDGMIDFKPIWEAIQESGYDGWIIVEAEQDPAKANPFEYALKAKKYLDATMNIPQSA</sequence>